<proteinExistence type="inferred from homology"/>
<keyword id="KW-0274">FAD</keyword>
<keyword id="KW-0285">Flavoprotein</keyword>
<keyword id="KW-0521">NADP</keyword>
<keyword id="KW-0560">Oxidoreductase</keyword>
<keyword id="KW-1185">Reference proteome</keyword>
<sequence length="348" mass="38586">MQEKEMFDLTIIGGGPAGLYSTFYAGMRDLKVKLVEYNKELGGKILFYPEKIIWDVGGMPPTTGRTLINQLVEQATTFNPTICLNEHIVRMVREPDNTYTLFNEQGKAHYTRAVMLASGHGIPVMQKLEIEGADRYEVSNLHYTVTQMDIFANKRVLISGGGNAAVDWANELANISKEVVVCHRRDEFGGHEKNVEQMKSVTKIHTPYQIKELHGVGSAIEAVTLAHCDTGEQRQIEVDAVIVNHGMKLDGCFLIEAGLALEEDGFLRVSACMETSQPGIFAAGDVTRHEGKLQLISGAFVEGATAVNGVKQFLDPKADKQAYVSSHNEKFKKKNEQLKQEKQAQLMN</sequence>
<comment type="catalytic activity">
    <reaction evidence="1">
        <text>2 reduced [2Fe-2S]-[ferredoxin] + NADP(+) + H(+) = 2 oxidized [2Fe-2S]-[ferredoxin] + NADPH</text>
        <dbReference type="Rhea" id="RHEA:20125"/>
        <dbReference type="Rhea" id="RHEA-COMP:10000"/>
        <dbReference type="Rhea" id="RHEA-COMP:10001"/>
        <dbReference type="ChEBI" id="CHEBI:15378"/>
        <dbReference type="ChEBI" id="CHEBI:33737"/>
        <dbReference type="ChEBI" id="CHEBI:33738"/>
        <dbReference type="ChEBI" id="CHEBI:57783"/>
        <dbReference type="ChEBI" id="CHEBI:58349"/>
        <dbReference type="EC" id="1.18.1.2"/>
    </reaction>
</comment>
<comment type="cofactor">
    <cofactor evidence="1">
        <name>FAD</name>
        <dbReference type="ChEBI" id="CHEBI:57692"/>
    </cofactor>
    <text evidence="1">Binds 1 FAD per subunit.</text>
</comment>
<comment type="subunit">
    <text evidence="1">Homodimer.</text>
</comment>
<comment type="similarity">
    <text evidence="1">Belongs to the ferredoxin--NADP reductase type 2 family.</text>
</comment>
<protein>
    <recommendedName>
        <fullName evidence="1">Ferredoxin--NADP reductase 1</fullName>
        <shortName evidence="1">FNR 1</shortName>
        <shortName evidence="1">Fd-NADP(+) reductase 1</shortName>
        <ecNumber evidence="1">1.18.1.2</ecNumber>
    </recommendedName>
</protein>
<reference key="1">
    <citation type="submission" date="2003-10" db="EMBL/GenBank/DDBJ databases">
        <title>The complete genome sequence of the alkaliphilic Bacillus clausii KSM-K16.</title>
        <authorList>
            <person name="Takaki Y."/>
            <person name="Kageyama Y."/>
            <person name="Shimamura S."/>
            <person name="Suzuki H."/>
            <person name="Nishi S."/>
            <person name="Hatada Y."/>
            <person name="Kawai S."/>
            <person name="Ito S."/>
            <person name="Horikoshi K."/>
        </authorList>
    </citation>
    <scope>NUCLEOTIDE SEQUENCE [LARGE SCALE GENOMIC DNA]</scope>
    <source>
        <strain>KSM-K16</strain>
    </source>
</reference>
<dbReference type="EC" id="1.18.1.2" evidence="1"/>
<dbReference type="EMBL" id="AP006627">
    <property type="protein sequence ID" value="BAD62637.1"/>
    <property type="molecule type" value="Genomic_DNA"/>
</dbReference>
<dbReference type="SMR" id="Q5WAF1"/>
<dbReference type="STRING" id="66692.ABC0094"/>
<dbReference type="KEGG" id="bcl:ABC0094"/>
<dbReference type="eggNOG" id="COG0492">
    <property type="taxonomic scope" value="Bacteria"/>
</dbReference>
<dbReference type="HOGENOM" id="CLU_031864_5_5_9"/>
<dbReference type="Proteomes" id="UP000001168">
    <property type="component" value="Chromosome"/>
</dbReference>
<dbReference type="GO" id="GO:0004324">
    <property type="term" value="F:ferredoxin-NADP+ reductase activity"/>
    <property type="evidence" value="ECO:0007669"/>
    <property type="project" value="UniProtKB-UniRule"/>
</dbReference>
<dbReference type="GO" id="GO:0050660">
    <property type="term" value="F:flavin adenine dinucleotide binding"/>
    <property type="evidence" value="ECO:0007669"/>
    <property type="project" value="UniProtKB-UniRule"/>
</dbReference>
<dbReference type="GO" id="GO:0050661">
    <property type="term" value="F:NADP binding"/>
    <property type="evidence" value="ECO:0007669"/>
    <property type="project" value="UniProtKB-UniRule"/>
</dbReference>
<dbReference type="Gene3D" id="3.50.50.60">
    <property type="entry name" value="FAD/NAD(P)-binding domain"/>
    <property type="match status" value="2"/>
</dbReference>
<dbReference type="HAMAP" id="MF_01685">
    <property type="entry name" value="FENR2"/>
    <property type="match status" value="1"/>
</dbReference>
<dbReference type="InterPro" id="IPR036188">
    <property type="entry name" value="FAD/NAD-bd_sf"/>
</dbReference>
<dbReference type="InterPro" id="IPR023753">
    <property type="entry name" value="FAD/NAD-binding_dom"/>
</dbReference>
<dbReference type="InterPro" id="IPR022890">
    <property type="entry name" value="Fd--NADP_Rdtase_type_2"/>
</dbReference>
<dbReference type="InterPro" id="IPR050097">
    <property type="entry name" value="Ferredoxin-NADP_redctase_2"/>
</dbReference>
<dbReference type="PANTHER" id="PTHR48105">
    <property type="entry name" value="THIOREDOXIN REDUCTASE 1-RELATED-RELATED"/>
    <property type="match status" value="1"/>
</dbReference>
<dbReference type="Pfam" id="PF07992">
    <property type="entry name" value="Pyr_redox_2"/>
    <property type="match status" value="1"/>
</dbReference>
<dbReference type="PRINTS" id="PR00368">
    <property type="entry name" value="FADPNR"/>
</dbReference>
<dbReference type="PRINTS" id="PR00469">
    <property type="entry name" value="PNDRDTASEII"/>
</dbReference>
<dbReference type="SUPFAM" id="SSF51905">
    <property type="entry name" value="FAD/NAD(P)-binding domain"/>
    <property type="match status" value="1"/>
</dbReference>
<accession>Q5WAF1</accession>
<name>FENR1_SHOC1</name>
<organism>
    <name type="scientific">Shouchella clausii (strain KSM-K16)</name>
    <name type="common">Alkalihalobacillus clausii</name>
    <dbReference type="NCBI Taxonomy" id="66692"/>
    <lineage>
        <taxon>Bacteria</taxon>
        <taxon>Bacillati</taxon>
        <taxon>Bacillota</taxon>
        <taxon>Bacilli</taxon>
        <taxon>Bacillales</taxon>
        <taxon>Bacillaceae</taxon>
        <taxon>Shouchella</taxon>
    </lineage>
</organism>
<evidence type="ECO:0000255" key="1">
    <source>
        <dbReference type="HAMAP-Rule" id="MF_01685"/>
    </source>
</evidence>
<evidence type="ECO:0000256" key="2">
    <source>
        <dbReference type="SAM" id="MobiDB-lite"/>
    </source>
</evidence>
<feature type="chain" id="PRO_0000364794" description="Ferredoxin--NADP reductase 1">
    <location>
        <begin position="1"/>
        <end position="348"/>
    </location>
</feature>
<feature type="region of interest" description="Disordered" evidence="2">
    <location>
        <begin position="329"/>
        <end position="348"/>
    </location>
</feature>
<feature type="binding site" evidence="1">
    <location>
        <position position="36"/>
    </location>
    <ligand>
        <name>FAD</name>
        <dbReference type="ChEBI" id="CHEBI:57692"/>
    </ligand>
</feature>
<feature type="binding site" evidence="1">
    <location>
        <position position="44"/>
    </location>
    <ligand>
        <name>FAD</name>
        <dbReference type="ChEBI" id="CHEBI:57692"/>
    </ligand>
</feature>
<feature type="binding site" evidence="1">
    <location>
        <position position="48"/>
    </location>
    <ligand>
        <name>FAD</name>
        <dbReference type="ChEBI" id="CHEBI:57692"/>
    </ligand>
</feature>
<feature type="binding site" evidence="1">
    <location>
        <position position="88"/>
    </location>
    <ligand>
        <name>FAD</name>
        <dbReference type="ChEBI" id="CHEBI:57692"/>
    </ligand>
</feature>
<feature type="binding site" evidence="1">
    <location>
        <position position="123"/>
    </location>
    <ligand>
        <name>FAD</name>
        <dbReference type="ChEBI" id="CHEBI:57692"/>
    </ligand>
</feature>
<feature type="binding site" evidence="1">
    <location>
        <position position="285"/>
    </location>
    <ligand>
        <name>FAD</name>
        <dbReference type="ChEBI" id="CHEBI:57692"/>
    </ligand>
</feature>
<feature type="binding site" evidence="1">
    <location>
        <position position="326"/>
    </location>
    <ligand>
        <name>FAD</name>
        <dbReference type="ChEBI" id="CHEBI:57692"/>
    </ligand>
</feature>
<gene>
    <name type="ordered locus">ABC0094</name>
</gene>